<gene>
    <name evidence="4" type="primary">FAX3</name>
    <name evidence="7" type="ordered locus">At2g38550</name>
    <name evidence="8" type="ORF">T6A23.25</name>
</gene>
<comment type="function">
    <text evidence="1">May be involved in free fatty acids export from the plastids.</text>
</comment>
<comment type="subcellular location">
    <subcellularLocation>
        <location evidence="5">Plastid</location>
        <location evidence="5">Chloroplast membrane</location>
        <topology evidence="5">Multi-pass membrane protein</topology>
    </subcellularLocation>
</comment>
<comment type="developmental stage">
    <text evidence="6">Highly expressed during seed development and germination.</text>
</comment>
<comment type="miscellaneous">
    <text evidence="6">For all TMEM14 proteins, 4 hydrophobic alpha-helical domains are predicted. However, NMR structure determination of the human TMEM14A showed that only 3 of these helices are membrane-spaning while the amphiphilic N-terminal helix is probably located at the lipid micelle-water interface.</text>
</comment>
<comment type="similarity">
    <text evidence="5">Belongs to the TMEM14 family.</text>
</comment>
<comment type="sequence caution" evidence="5">
    <conflict type="erroneous initiation">
        <sequence resource="EMBL-CDS" id="AAM63598"/>
    </conflict>
    <text>Truncated N-terminus.</text>
</comment>
<protein>
    <recommendedName>
        <fullName evidence="4">Protein FATTY ACID EXPORT 3, chloroplastic</fullName>
        <shortName evidence="4">At-FAX3</shortName>
    </recommendedName>
</protein>
<feature type="transit peptide" description="Chloroplast" evidence="2">
    <location>
        <begin position="1"/>
        <end position="72"/>
    </location>
</feature>
<feature type="chain" id="PRO_0000432803" description="Protein FATTY ACID EXPORT 3, chloroplastic" evidence="2">
    <location>
        <begin position="73"/>
        <end position="335"/>
    </location>
</feature>
<feature type="transmembrane region" description="Helical; Name=1" evidence="2">
    <location>
        <begin position="205"/>
        <end position="225"/>
    </location>
</feature>
<feature type="transmembrane region" description="Helical; Name=2" evidence="2">
    <location>
        <begin position="228"/>
        <end position="248"/>
    </location>
</feature>
<feature type="transmembrane region" description="Helical; Name=3" evidence="2">
    <location>
        <begin position="286"/>
        <end position="306"/>
    </location>
</feature>
<feature type="region of interest" description="Disordered" evidence="3">
    <location>
        <begin position="82"/>
        <end position="101"/>
    </location>
</feature>
<feature type="region of interest" description="Disordered" evidence="3">
    <location>
        <begin position="316"/>
        <end position="335"/>
    </location>
</feature>
<feature type="coiled-coil region" evidence="2">
    <location>
        <begin position="101"/>
        <end position="160"/>
    </location>
</feature>
<feature type="compositionally biased region" description="Basic and acidic residues" evidence="3">
    <location>
        <begin position="88"/>
        <end position="101"/>
    </location>
</feature>
<accession>Q9ZVH7</accession>
<accession>Q8LCL4</accession>
<accession>Q94CA2</accession>
<sequence>MMSIPMELMSIRNPNSTLLYRAHSRPPVKLCAPPRSLLPSRRHFSAPRAVVSYPGIRFGFTSPEVLLNRSVVAFAASHEDSGESGVEVGKEKSDIDVEDDTSKEAWKQTLESFKEQVSKMQSVSSEAYSVNSQKAMTVLKETSEQLRIQAEKAKEELGTKAKVVSEEGREYILKAAEESPSDVKEIVEAFASTEDLKNVSRANDFHVGIPYGLLLLVGGFINFMVSGSIPAIRFGVILGGALFALSLASLKSHRKGESSTKFLKGQMAIVAIIFLRELRLLLSQKSTFLGFFTTLTSGGVLGFYLYKMVVKREKGPTLEDGGEDESSDGFVRSEG</sequence>
<reference key="1">
    <citation type="journal article" date="1999" name="Nature">
        <title>Sequence and analysis of chromosome 2 of the plant Arabidopsis thaliana.</title>
        <authorList>
            <person name="Lin X."/>
            <person name="Kaul S."/>
            <person name="Rounsley S.D."/>
            <person name="Shea T.P."/>
            <person name="Benito M.-I."/>
            <person name="Town C.D."/>
            <person name="Fujii C.Y."/>
            <person name="Mason T.M."/>
            <person name="Bowman C.L."/>
            <person name="Barnstead M.E."/>
            <person name="Feldblyum T.V."/>
            <person name="Buell C.R."/>
            <person name="Ketchum K.A."/>
            <person name="Lee J.J."/>
            <person name="Ronning C.M."/>
            <person name="Koo H.L."/>
            <person name="Moffat K.S."/>
            <person name="Cronin L.A."/>
            <person name="Shen M."/>
            <person name="Pai G."/>
            <person name="Van Aken S."/>
            <person name="Umayam L."/>
            <person name="Tallon L.J."/>
            <person name="Gill J.E."/>
            <person name="Adams M.D."/>
            <person name="Carrera A.J."/>
            <person name="Creasy T.H."/>
            <person name="Goodman H.M."/>
            <person name="Somerville C.R."/>
            <person name="Copenhaver G.P."/>
            <person name="Preuss D."/>
            <person name="Nierman W.C."/>
            <person name="White O."/>
            <person name="Eisen J.A."/>
            <person name="Salzberg S.L."/>
            <person name="Fraser C.M."/>
            <person name="Venter J.C."/>
        </authorList>
    </citation>
    <scope>NUCLEOTIDE SEQUENCE [LARGE SCALE GENOMIC DNA]</scope>
    <source>
        <strain>cv. Columbia</strain>
    </source>
</reference>
<reference key="2">
    <citation type="journal article" date="2017" name="Plant J.">
        <title>Araport11: a complete reannotation of the Arabidopsis thaliana reference genome.</title>
        <authorList>
            <person name="Cheng C.Y."/>
            <person name="Krishnakumar V."/>
            <person name="Chan A.P."/>
            <person name="Thibaud-Nissen F."/>
            <person name="Schobel S."/>
            <person name="Town C.D."/>
        </authorList>
    </citation>
    <scope>GENOME REANNOTATION</scope>
    <source>
        <strain>cv. Columbia</strain>
    </source>
</reference>
<reference key="3">
    <citation type="journal article" date="2003" name="Science">
        <title>Empirical analysis of transcriptional activity in the Arabidopsis genome.</title>
        <authorList>
            <person name="Yamada K."/>
            <person name="Lim J."/>
            <person name="Dale J.M."/>
            <person name="Chen H."/>
            <person name="Shinn P."/>
            <person name="Palm C.J."/>
            <person name="Southwick A.M."/>
            <person name="Wu H.C."/>
            <person name="Kim C.J."/>
            <person name="Nguyen M."/>
            <person name="Pham P.K."/>
            <person name="Cheuk R.F."/>
            <person name="Karlin-Newmann G."/>
            <person name="Liu S.X."/>
            <person name="Lam B."/>
            <person name="Sakano H."/>
            <person name="Wu T."/>
            <person name="Yu G."/>
            <person name="Miranda M."/>
            <person name="Quach H.L."/>
            <person name="Tripp M."/>
            <person name="Chang C.H."/>
            <person name="Lee J.M."/>
            <person name="Toriumi M.J."/>
            <person name="Chan M.M."/>
            <person name="Tang C.C."/>
            <person name="Onodera C.S."/>
            <person name="Deng J.M."/>
            <person name="Akiyama K."/>
            <person name="Ansari Y."/>
            <person name="Arakawa T."/>
            <person name="Banh J."/>
            <person name="Banno F."/>
            <person name="Bowser L."/>
            <person name="Brooks S.Y."/>
            <person name="Carninci P."/>
            <person name="Chao Q."/>
            <person name="Choy N."/>
            <person name="Enju A."/>
            <person name="Goldsmith A.D."/>
            <person name="Gurjal M."/>
            <person name="Hansen N.F."/>
            <person name="Hayashizaki Y."/>
            <person name="Johnson-Hopson C."/>
            <person name="Hsuan V.W."/>
            <person name="Iida K."/>
            <person name="Karnes M."/>
            <person name="Khan S."/>
            <person name="Koesema E."/>
            <person name="Ishida J."/>
            <person name="Jiang P.X."/>
            <person name="Jones T."/>
            <person name="Kawai J."/>
            <person name="Kamiya A."/>
            <person name="Meyers C."/>
            <person name="Nakajima M."/>
            <person name="Narusaka M."/>
            <person name="Seki M."/>
            <person name="Sakurai T."/>
            <person name="Satou M."/>
            <person name="Tamse R."/>
            <person name="Vaysberg M."/>
            <person name="Wallender E.K."/>
            <person name="Wong C."/>
            <person name="Yamamura Y."/>
            <person name="Yuan S."/>
            <person name="Shinozaki K."/>
            <person name="Davis R.W."/>
            <person name="Theologis A."/>
            <person name="Ecker J.R."/>
        </authorList>
    </citation>
    <scope>NUCLEOTIDE SEQUENCE [LARGE SCALE MRNA]</scope>
    <source>
        <strain>cv. Columbia</strain>
    </source>
</reference>
<reference key="4">
    <citation type="submission" date="2002-03" db="EMBL/GenBank/DDBJ databases">
        <title>Full-length cDNA from Arabidopsis thaliana.</title>
        <authorList>
            <person name="Brover V.V."/>
            <person name="Troukhan M.E."/>
            <person name="Alexandrov N.A."/>
            <person name="Lu Y.-P."/>
            <person name="Flavell R.B."/>
            <person name="Feldmann K.A."/>
        </authorList>
    </citation>
    <scope>NUCLEOTIDE SEQUENCE [LARGE SCALE MRNA]</scope>
</reference>
<reference key="5">
    <citation type="journal article" date="2015" name="PLoS Biol.">
        <title>FAX1, a novel membrane protein mediating plastid fatty acid export.</title>
        <authorList>
            <person name="Li N."/>
            <person name="Guegel I.L."/>
            <person name="Giavalisco P."/>
            <person name="Zeisler V."/>
            <person name="Schreiber L."/>
            <person name="Soll J."/>
            <person name="Philippar K."/>
        </authorList>
    </citation>
    <scope>GENE FAMILY</scope>
    <scope>NOMENCLATURE</scope>
    <scope>DEVELOPMENTAL STAGE</scope>
</reference>
<name>FAX3_ARATH</name>
<organism evidence="9">
    <name type="scientific">Arabidopsis thaliana</name>
    <name type="common">Mouse-ear cress</name>
    <dbReference type="NCBI Taxonomy" id="3702"/>
    <lineage>
        <taxon>Eukaryota</taxon>
        <taxon>Viridiplantae</taxon>
        <taxon>Streptophyta</taxon>
        <taxon>Embryophyta</taxon>
        <taxon>Tracheophyta</taxon>
        <taxon>Spermatophyta</taxon>
        <taxon>Magnoliopsida</taxon>
        <taxon>eudicotyledons</taxon>
        <taxon>Gunneridae</taxon>
        <taxon>Pentapetalae</taxon>
        <taxon>rosids</taxon>
        <taxon>malvids</taxon>
        <taxon>Brassicales</taxon>
        <taxon>Brassicaceae</taxon>
        <taxon>Camelineae</taxon>
        <taxon>Arabidopsis</taxon>
    </lineage>
</organism>
<dbReference type="EMBL" id="AC005499">
    <property type="protein sequence ID" value="AAC67363.2"/>
    <property type="molecule type" value="Genomic_DNA"/>
</dbReference>
<dbReference type="EMBL" id="CP002685">
    <property type="protein sequence ID" value="AEC09549.1"/>
    <property type="molecule type" value="Genomic_DNA"/>
</dbReference>
<dbReference type="EMBL" id="AY035020">
    <property type="protein sequence ID" value="AAK59525.1"/>
    <property type="molecule type" value="mRNA"/>
</dbReference>
<dbReference type="EMBL" id="AY133772">
    <property type="protein sequence ID" value="AAM91706.1"/>
    <property type="molecule type" value="mRNA"/>
</dbReference>
<dbReference type="EMBL" id="AY086533">
    <property type="protein sequence ID" value="AAM63598.1"/>
    <property type="status" value="ALT_INIT"/>
    <property type="molecule type" value="mRNA"/>
</dbReference>
<dbReference type="PIR" id="D84806">
    <property type="entry name" value="D84806"/>
</dbReference>
<dbReference type="RefSeq" id="NP_565892.1">
    <property type="nucleotide sequence ID" value="NM_129412.4"/>
</dbReference>
<dbReference type="SMR" id="Q9ZVH7"/>
<dbReference type="FunCoup" id="Q9ZVH7">
    <property type="interactions" value="1582"/>
</dbReference>
<dbReference type="STRING" id="3702.Q9ZVH7"/>
<dbReference type="PaxDb" id="3702-AT2G38550.1"/>
<dbReference type="ProteomicsDB" id="230961"/>
<dbReference type="EnsemblPlants" id="AT2G38550.1">
    <property type="protein sequence ID" value="AT2G38550.1"/>
    <property type="gene ID" value="AT2G38550"/>
</dbReference>
<dbReference type="GeneID" id="818437"/>
<dbReference type="Gramene" id="AT2G38550.1">
    <property type="protein sequence ID" value="AT2G38550.1"/>
    <property type="gene ID" value="AT2G38550"/>
</dbReference>
<dbReference type="KEGG" id="ath:AT2G38550"/>
<dbReference type="Araport" id="AT2G38550"/>
<dbReference type="TAIR" id="AT2G38550">
    <property type="gene designation" value="FAX2"/>
</dbReference>
<dbReference type="eggNOG" id="ENOG502QQ5P">
    <property type="taxonomic scope" value="Eukaryota"/>
</dbReference>
<dbReference type="HOGENOM" id="CLU_062320_0_0_1"/>
<dbReference type="InParanoid" id="Q9ZVH7"/>
<dbReference type="OMA" id="RMQGISK"/>
<dbReference type="PhylomeDB" id="Q9ZVH7"/>
<dbReference type="PRO" id="PR:Q9ZVH7"/>
<dbReference type="Proteomes" id="UP000006548">
    <property type="component" value="Chromosome 2"/>
</dbReference>
<dbReference type="ExpressionAtlas" id="Q9ZVH7">
    <property type="expression patterns" value="baseline and differential"/>
</dbReference>
<dbReference type="GO" id="GO:0009507">
    <property type="term" value="C:chloroplast"/>
    <property type="evidence" value="ECO:0007005"/>
    <property type="project" value="TAIR"/>
</dbReference>
<dbReference type="GO" id="GO:0009941">
    <property type="term" value="C:chloroplast envelope"/>
    <property type="evidence" value="ECO:0007005"/>
    <property type="project" value="TAIR"/>
</dbReference>
<dbReference type="GO" id="GO:0009706">
    <property type="term" value="C:chloroplast inner membrane"/>
    <property type="evidence" value="ECO:0007005"/>
    <property type="project" value="TAIR"/>
</dbReference>
<dbReference type="GO" id="GO:0031969">
    <property type="term" value="C:chloroplast membrane"/>
    <property type="evidence" value="ECO:0000314"/>
    <property type="project" value="TAIR"/>
</dbReference>
<dbReference type="GO" id="GO:0005794">
    <property type="term" value="C:Golgi apparatus"/>
    <property type="evidence" value="ECO:0007005"/>
    <property type="project" value="TAIR"/>
</dbReference>
<dbReference type="GO" id="GO:0009536">
    <property type="term" value="C:plastid"/>
    <property type="evidence" value="ECO:0007005"/>
    <property type="project" value="TAIR"/>
</dbReference>
<dbReference type="GO" id="GO:0009793">
    <property type="term" value="P:embryo development ending in seed dormancy"/>
    <property type="evidence" value="ECO:0000316"/>
    <property type="project" value="TAIR"/>
</dbReference>
<dbReference type="GO" id="GO:0015908">
    <property type="term" value="P:fatty acid transport"/>
    <property type="evidence" value="ECO:0000316"/>
    <property type="project" value="TAIR"/>
</dbReference>
<dbReference type="GO" id="GO:1905885">
    <property type="term" value="P:positive regulation of triglyceride transport"/>
    <property type="evidence" value="ECO:0000315"/>
    <property type="project" value="TAIR"/>
</dbReference>
<dbReference type="GO" id="GO:0019217">
    <property type="term" value="P:regulation of fatty acid metabolic process"/>
    <property type="evidence" value="ECO:0000315"/>
    <property type="project" value="TAIR"/>
</dbReference>
<dbReference type="FunFam" id="1.10.10.1740:FF:000006">
    <property type="entry name" value="Protein FATTY ACID EXPORT 3, chloroplastic"/>
    <property type="match status" value="1"/>
</dbReference>
<dbReference type="Gene3D" id="1.10.10.1740">
    <property type="entry name" value="Transmembrane protein 14-like"/>
    <property type="match status" value="1"/>
</dbReference>
<dbReference type="InterPro" id="IPR005349">
    <property type="entry name" value="TMEM14"/>
</dbReference>
<dbReference type="InterPro" id="IPR044890">
    <property type="entry name" value="TMEM14_sf"/>
</dbReference>
<dbReference type="PANTHER" id="PTHR12668:SF43">
    <property type="entry name" value="TRANSMEMBRANE PROTEIN 14 HOMOLOG"/>
    <property type="match status" value="1"/>
</dbReference>
<dbReference type="PANTHER" id="PTHR12668">
    <property type="entry name" value="TRANSMEMBRANE PROTEIN 14, 15"/>
    <property type="match status" value="1"/>
</dbReference>
<dbReference type="Pfam" id="PF03647">
    <property type="entry name" value="Tmemb_14"/>
    <property type="match status" value="1"/>
</dbReference>
<proteinExistence type="evidence at transcript level"/>
<keyword id="KW-0150">Chloroplast</keyword>
<keyword id="KW-0175">Coiled coil</keyword>
<keyword id="KW-0472">Membrane</keyword>
<keyword id="KW-0934">Plastid</keyword>
<keyword id="KW-1185">Reference proteome</keyword>
<keyword id="KW-0809">Transit peptide</keyword>
<keyword id="KW-0812">Transmembrane</keyword>
<keyword id="KW-1133">Transmembrane helix</keyword>
<evidence type="ECO:0000250" key="1">
    <source>
        <dbReference type="UniProtKB" id="Q93V66"/>
    </source>
</evidence>
<evidence type="ECO:0000255" key="2"/>
<evidence type="ECO:0000256" key="3">
    <source>
        <dbReference type="SAM" id="MobiDB-lite"/>
    </source>
</evidence>
<evidence type="ECO:0000303" key="4">
    <source>
    </source>
</evidence>
<evidence type="ECO:0000305" key="5"/>
<evidence type="ECO:0000305" key="6">
    <source>
    </source>
</evidence>
<evidence type="ECO:0000312" key="7">
    <source>
        <dbReference type="Araport" id="AT2G38550"/>
    </source>
</evidence>
<evidence type="ECO:0000312" key="8">
    <source>
        <dbReference type="EMBL" id="AAC67363.2"/>
    </source>
</evidence>
<evidence type="ECO:0000312" key="9">
    <source>
        <dbReference type="Proteomes" id="UP000006548"/>
    </source>
</evidence>